<organism>
    <name type="scientific">Mycobacterium tuberculosis (strain ATCC 25618 / H37Rv)</name>
    <dbReference type="NCBI Taxonomy" id="83332"/>
    <lineage>
        <taxon>Bacteria</taxon>
        <taxon>Bacillati</taxon>
        <taxon>Actinomycetota</taxon>
        <taxon>Actinomycetes</taxon>
        <taxon>Mycobacteriales</taxon>
        <taxon>Mycobacteriaceae</taxon>
        <taxon>Mycobacterium</taxon>
        <taxon>Mycobacterium tuberculosis complex</taxon>
    </lineage>
</organism>
<keyword id="KW-0002">3D-structure</keyword>
<keyword id="KW-0547">Nucleotide-binding</keyword>
<keyword id="KW-0597">Phosphoprotein</keyword>
<keyword id="KW-1185">Reference proteome</keyword>
<keyword id="KW-0804">Transcription</keyword>
<keyword id="KW-0805">Transcription regulation</keyword>
<dbReference type="EMBL" id="AL123456">
    <property type="protein sequence ID" value="CCP45721.1"/>
    <property type="molecule type" value="Genomic_DNA"/>
</dbReference>
<dbReference type="PIR" id="G70747">
    <property type="entry name" value="G70747"/>
</dbReference>
<dbReference type="RefSeq" id="NP_217435.1">
    <property type="nucleotide sequence ID" value="NC_000962.3"/>
</dbReference>
<dbReference type="RefSeq" id="WP_003414756.1">
    <property type="nucleotide sequence ID" value="NZ_NVQJ01000006.1"/>
</dbReference>
<dbReference type="PDB" id="3BZQ">
    <property type="method" value="X-ray"/>
    <property type="resolution" value="1.40 A"/>
    <property type="chains" value="A=1-112"/>
</dbReference>
<dbReference type="PDB" id="3LF0">
    <property type="method" value="X-ray"/>
    <property type="resolution" value="2.40 A"/>
    <property type="chains" value="A/B/C=1-112"/>
</dbReference>
<dbReference type="PDBsum" id="3BZQ"/>
<dbReference type="PDBsum" id="3LF0"/>
<dbReference type="SMR" id="P9WN31"/>
<dbReference type="FunCoup" id="P9WN31">
    <property type="interactions" value="218"/>
</dbReference>
<dbReference type="STRING" id="83332.Rv2919c"/>
<dbReference type="PaxDb" id="83332-Rv2919c"/>
<dbReference type="DNASU" id="887756"/>
<dbReference type="GeneID" id="45426906"/>
<dbReference type="GeneID" id="887756"/>
<dbReference type="KEGG" id="mtu:Rv2919c"/>
<dbReference type="KEGG" id="mtv:RVBD_2919c"/>
<dbReference type="TubercuList" id="Rv2919c"/>
<dbReference type="eggNOG" id="COG0347">
    <property type="taxonomic scope" value="Bacteria"/>
</dbReference>
<dbReference type="InParanoid" id="P9WN31"/>
<dbReference type="OrthoDB" id="9802729at2"/>
<dbReference type="PhylomeDB" id="P9WN31"/>
<dbReference type="EvolutionaryTrace" id="P9WN31"/>
<dbReference type="Proteomes" id="UP000001584">
    <property type="component" value="Chromosome"/>
</dbReference>
<dbReference type="GO" id="GO:0005829">
    <property type="term" value="C:cytosol"/>
    <property type="evidence" value="ECO:0000318"/>
    <property type="project" value="GO_Central"/>
</dbReference>
<dbReference type="GO" id="GO:0005886">
    <property type="term" value="C:plasma membrane"/>
    <property type="evidence" value="ECO:0007005"/>
    <property type="project" value="MTBBASE"/>
</dbReference>
<dbReference type="GO" id="GO:0043531">
    <property type="term" value="F:ADP binding"/>
    <property type="evidence" value="ECO:0000314"/>
    <property type="project" value="MTBBASE"/>
</dbReference>
<dbReference type="GO" id="GO:0005524">
    <property type="term" value="F:ATP binding"/>
    <property type="evidence" value="ECO:0000314"/>
    <property type="project" value="MTBBASE"/>
</dbReference>
<dbReference type="GO" id="GO:0030234">
    <property type="term" value="F:enzyme regulator activity"/>
    <property type="evidence" value="ECO:0000318"/>
    <property type="project" value="GO_Central"/>
</dbReference>
<dbReference type="GO" id="GO:0051701">
    <property type="term" value="P:biological process involved in interaction with host"/>
    <property type="evidence" value="ECO:0000315"/>
    <property type="project" value="MTBBASE"/>
</dbReference>
<dbReference type="GO" id="GO:0006808">
    <property type="term" value="P:regulation of nitrogen utilization"/>
    <property type="evidence" value="ECO:0000318"/>
    <property type="project" value="GO_Central"/>
</dbReference>
<dbReference type="FunFam" id="3.30.70.120:FF:000001">
    <property type="entry name" value="Nitrogen regulatory protein P-II"/>
    <property type="match status" value="1"/>
</dbReference>
<dbReference type="Gene3D" id="3.30.70.120">
    <property type="match status" value="1"/>
</dbReference>
<dbReference type="InterPro" id="IPR002187">
    <property type="entry name" value="N-reg_PII"/>
</dbReference>
<dbReference type="InterPro" id="IPR011322">
    <property type="entry name" value="N-reg_PII-like_a/b"/>
</dbReference>
<dbReference type="InterPro" id="IPR015867">
    <property type="entry name" value="N-reg_PII/ATP_PRibTrfase_C"/>
</dbReference>
<dbReference type="InterPro" id="IPR017918">
    <property type="entry name" value="N-reg_PII_CS"/>
</dbReference>
<dbReference type="InterPro" id="IPR002332">
    <property type="entry name" value="N-reg_PII_urydylation_site"/>
</dbReference>
<dbReference type="PANTHER" id="PTHR30115">
    <property type="entry name" value="NITROGEN REGULATORY PROTEIN P-II"/>
    <property type="match status" value="1"/>
</dbReference>
<dbReference type="PANTHER" id="PTHR30115:SF11">
    <property type="entry name" value="NITROGEN REGULATORY PROTEIN P-II HOMOLOG"/>
    <property type="match status" value="1"/>
</dbReference>
<dbReference type="Pfam" id="PF00543">
    <property type="entry name" value="P-II"/>
    <property type="match status" value="1"/>
</dbReference>
<dbReference type="PIRSF" id="PIRSF039144">
    <property type="entry name" value="GlnB"/>
    <property type="match status" value="1"/>
</dbReference>
<dbReference type="PRINTS" id="PR00340">
    <property type="entry name" value="PIIGLNB"/>
</dbReference>
<dbReference type="SMART" id="SM00938">
    <property type="entry name" value="P-II"/>
    <property type="match status" value="1"/>
</dbReference>
<dbReference type="SUPFAM" id="SSF54913">
    <property type="entry name" value="GlnB-like"/>
    <property type="match status" value="1"/>
</dbReference>
<dbReference type="PROSITE" id="PS00638">
    <property type="entry name" value="PII_GLNB_CTER"/>
    <property type="match status" value="1"/>
</dbReference>
<dbReference type="PROSITE" id="PS51343">
    <property type="entry name" value="PII_GLNB_DOM"/>
    <property type="match status" value="1"/>
</dbReference>
<dbReference type="PROSITE" id="PS00496">
    <property type="entry name" value="PII_GLNB_UMP"/>
    <property type="match status" value="1"/>
</dbReference>
<sequence length="112" mass="12227">MKLITAIVKPFTLDDVKTSLEDAGVLGMTVSEIQGYGRQKGHTEVYRGAEYSVDFVPKVRIEVVVDDSIVDKVVDSIVRAARTGKIGDGKVWVSPVDTIVRVRTGERGHDAL</sequence>
<comment type="function">
    <text evidence="1">In nitrogen-limiting conditions, when the ratio of Gln to 2-ketoglutarate decreases, P-II is uridylylated to P-II-UMP. P-II-UMP allows the deadenylation of glutamine synthetase (GS), thus activating the enzyme. Conversely, in nitrogen excess P-II is deuridylated and promotes the adenylation of GS. P-II indirectly controls the transcription of the GS gene (glnA). P-II prevents NR-II-catalyzed conversion of NR-I to NR-I-phosphate, the transcriptional activator of glnA. When P-II is uridylylated to P-II-UMP, these events are reversed (By similarity).</text>
</comment>
<comment type="subunit">
    <text evidence="1">Homotrimer.</text>
</comment>
<comment type="similarity">
    <text evidence="2">Belongs to the P(II) protein family.</text>
</comment>
<gene>
    <name type="primary">glnB</name>
    <name type="ordered locus">Rv2919c</name>
    <name type="ORF">MTCY338.08c</name>
</gene>
<accession>P9WN31</accession>
<accession>L0TB95</accession>
<accession>P64249</accession>
<accession>Q10960</accession>
<proteinExistence type="evidence at protein level"/>
<reference key="1">
    <citation type="journal article" date="1998" name="Nature">
        <title>Deciphering the biology of Mycobacterium tuberculosis from the complete genome sequence.</title>
        <authorList>
            <person name="Cole S.T."/>
            <person name="Brosch R."/>
            <person name="Parkhill J."/>
            <person name="Garnier T."/>
            <person name="Churcher C.M."/>
            <person name="Harris D.E."/>
            <person name="Gordon S.V."/>
            <person name="Eiglmeier K."/>
            <person name="Gas S."/>
            <person name="Barry C.E. III"/>
            <person name="Tekaia F."/>
            <person name="Badcock K."/>
            <person name="Basham D."/>
            <person name="Brown D."/>
            <person name="Chillingworth T."/>
            <person name="Connor R."/>
            <person name="Davies R.M."/>
            <person name="Devlin K."/>
            <person name="Feltwell T."/>
            <person name="Gentles S."/>
            <person name="Hamlin N."/>
            <person name="Holroyd S."/>
            <person name="Hornsby T."/>
            <person name="Jagels K."/>
            <person name="Krogh A."/>
            <person name="McLean J."/>
            <person name="Moule S."/>
            <person name="Murphy L.D."/>
            <person name="Oliver S."/>
            <person name="Osborne J."/>
            <person name="Quail M.A."/>
            <person name="Rajandream M.A."/>
            <person name="Rogers J."/>
            <person name="Rutter S."/>
            <person name="Seeger K."/>
            <person name="Skelton S."/>
            <person name="Squares S."/>
            <person name="Squares R."/>
            <person name="Sulston J.E."/>
            <person name="Taylor K."/>
            <person name="Whitehead S."/>
            <person name="Barrell B.G."/>
        </authorList>
    </citation>
    <scope>NUCLEOTIDE SEQUENCE [LARGE SCALE GENOMIC DNA]</scope>
    <source>
        <strain>ATCC 25618 / H37Rv</strain>
    </source>
</reference>
<reference key="2">
    <citation type="journal article" date="2011" name="Mol. Cell. Proteomics">
        <title>Proteogenomic analysis of Mycobacterium tuberculosis by high resolution mass spectrometry.</title>
        <authorList>
            <person name="Kelkar D.S."/>
            <person name="Kumar D."/>
            <person name="Kumar P."/>
            <person name="Balakrishnan L."/>
            <person name="Muthusamy B."/>
            <person name="Yadav A.K."/>
            <person name="Shrivastava P."/>
            <person name="Marimuthu A."/>
            <person name="Anand S."/>
            <person name="Sundaram H."/>
            <person name="Kingsbury R."/>
            <person name="Harsha H.C."/>
            <person name="Nair B."/>
            <person name="Prasad T.S."/>
            <person name="Chauhan D.S."/>
            <person name="Katoch K."/>
            <person name="Katoch V.M."/>
            <person name="Kumar P."/>
            <person name="Chaerkady R."/>
            <person name="Ramachandran S."/>
            <person name="Dash D."/>
            <person name="Pandey A."/>
        </authorList>
    </citation>
    <scope>IDENTIFICATION BY MASS SPECTROMETRY [LARGE SCALE ANALYSIS]</scope>
    <source>
        <strain>ATCC 25618 / H37Rv</strain>
    </source>
</reference>
<name>GLNB_MYCTU</name>
<protein>
    <recommendedName>
        <fullName>Nitrogen regulatory protein P-II</fullName>
    </recommendedName>
</protein>
<evidence type="ECO:0000250" key="1"/>
<evidence type="ECO:0000255" key="2">
    <source>
        <dbReference type="PROSITE-ProRule" id="PRU00675"/>
    </source>
</evidence>
<evidence type="ECO:0007829" key="3">
    <source>
        <dbReference type="PDB" id="3BZQ"/>
    </source>
</evidence>
<evidence type="ECO:0007829" key="4">
    <source>
        <dbReference type="PDB" id="3LF0"/>
    </source>
</evidence>
<feature type="chain" id="PRO_0000139779" description="Nitrogen regulatory protein P-II">
    <location>
        <begin position="1"/>
        <end position="112"/>
    </location>
</feature>
<feature type="modified residue" description="O-UMP-tyrosine" evidence="2">
    <location>
        <position position="51"/>
    </location>
</feature>
<feature type="strand" evidence="3">
    <location>
        <begin position="1"/>
        <end position="8"/>
    </location>
</feature>
<feature type="helix" evidence="3">
    <location>
        <begin position="10"/>
        <end position="12"/>
    </location>
</feature>
<feature type="helix" evidence="3">
    <location>
        <begin position="13"/>
        <end position="22"/>
    </location>
</feature>
<feature type="strand" evidence="3">
    <location>
        <begin position="29"/>
        <end position="36"/>
    </location>
</feature>
<feature type="strand" evidence="4">
    <location>
        <begin position="42"/>
        <end position="46"/>
    </location>
</feature>
<feature type="strand" evidence="4">
    <location>
        <begin position="49"/>
        <end position="53"/>
    </location>
</feature>
<feature type="strand" evidence="3">
    <location>
        <begin position="55"/>
        <end position="66"/>
    </location>
</feature>
<feature type="turn" evidence="3">
    <location>
        <begin position="67"/>
        <end position="69"/>
    </location>
</feature>
<feature type="helix" evidence="3">
    <location>
        <begin position="70"/>
        <end position="81"/>
    </location>
</feature>
<feature type="strand" evidence="3">
    <location>
        <begin position="90"/>
        <end position="97"/>
    </location>
</feature>
<feature type="strand" evidence="4">
    <location>
        <begin position="98"/>
        <end position="101"/>
    </location>
</feature>
<feature type="turn" evidence="3">
    <location>
        <begin position="102"/>
        <end position="104"/>
    </location>
</feature>
<feature type="helix" evidence="3">
    <location>
        <begin position="108"/>
        <end position="111"/>
    </location>
</feature>